<evidence type="ECO:0000269" key="1">
    <source>
    </source>
</evidence>
<evidence type="ECO:0000305" key="2"/>
<evidence type="ECO:0007829" key="3">
    <source>
        <dbReference type="PDB" id="8Q3B"/>
    </source>
</evidence>
<evidence type="ECO:0007829" key="4">
    <source>
        <dbReference type="PDB" id="8Q3K"/>
    </source>
</evidence>
<name>VF122_ASFB7</name>
<keyword id="KW-0002">3D-structure</keyword>
<keyword id="KW-1185">Reference proteome</keyword>
<keyword id="KW-0946">Virion</keyword>
<gene>
    <name type="ordered locus">Ba71V-065</name>
    <name type="ORF">C122R</name>
</gene>
<feature type="chain" id="PRO_0000373485" description="Uncharacterized protein C122R">
    <location>
        <begin position="1"/>
        <end position="105"/>
    </location>
</feature>
<feature type="strand" evidence="3">
    <location>
        <begin position="5"/>
        <end position="8"/>
    </location>
</feature>
<feature type="strand" evidence="4">
    <location>
        <begin position="12"/>
        <end position="15"/>
    </location>
</feature>
<feature type="strand" evidence="3">
    <location>
        <begin position="21"/>
        <end position="24"/>
    </location>
</feature>
<feature type="strand" evidence="3">
    <location>
        <begin position="27"/>
        <end position="31"/>
    </location>
</feature>
<feature type="helix" evidence="3">
    <location>
        <begin position="34"/>
        <end position="36"/>
    </location>
</feature>
<feature type="strand" evidence="3">
    <location>
        <begin position="40"/>
        <end position="44"/>
    </location>
</feature>
<feature type="helix" evidence="3">
    <location>
        <begin position="50"/>
        <end position="59"/>
    </location>
</feature>
<feature type="helix" evidence="3">
    <location>
        <begin position="60"/>
        <end position="62"/>
    </location>
</feature>
<feature type="strand" evidence="4">
    <location>
        <begin position="68"/>
        <end position="70"/>
    </location>
</feature>
<feature type="turn" evidence="3">
    <location>
        <begin position="74"/>
        <end position="76"/>
    </location>
</feature>
<feature type="strand" evidence="3">
    <location>
        <begin position="81"/>
        <end position="86"/>
    </location>
</feature>
<feature type="turn" evidence="3">
    <location>
        <begin position="87"/>
        <end position="90"/>
    </location>
</feature>
<feature type="strand" evidence="3">
    <location>
        <begin position="91"/>
        <end position="95"/>
    </location>
</feature>
<feature type="strand" evidence="3">
    <location>
        <begin position="97"/>
        <end position="99"/>
    </location>
</feature>
<feature type="turn" evidence="3">
    <location>
        <begin position="102"/>
        <end position="104"/>
    </location>
</feature>
<sequence>MKICKACSSCMVRTYVDGNIIFRCSCGESVQGDSQNLLVSSKVYHTGEMEDKYKIFIKNAPFDPTNCQIKKDCPNCHLDYLTQICIGSQKIIILVCRCGYMSNRG</sequence>
<organism>
    <name type="scientific">African swine fever virus (strain Badajoz 1971 Vero-adapted)</name>
    <name type="common">Ba71V</name>
    <name type="synonym">ASFV</name>
    <dbReference type="NCBI Taxonomy" id="10498"/>
    <lineage>
        <taxon>Viruses</taxon>
        <taxon>Varidnaviria</taxon>
        <taxon>Bamfordvirae</taxon>
        <taxon>Nucleocytoviricota</taxon>
        <taxon>Pokkesviricetes</taxon>
        <taxon>Asfuvirales</taxon>
        <taxon>Asfarviridae</taxon>
        <taxon>Asfivirus</taxon>
        <taxon>African swine fever virus</taxon>
    </lineage>
</organism>
<accession>Q65157</accession>
<dbReference type="EMBL" id="U18466">
    <property type="protein sequence ID" value="AAA65295.2"/>
    <property type="molecule type" value="Genomic_DNA"/>
</dbReference>
<dbReference type="PDB" id="8Q3B">
    <property type="method" value="EM"/>
    <property type="resolution" value="2.69 A"/>
    <property type="chains" value="I=1-105"/>
</dbReference>
<dbReference type="PDB" id="8Q3K">
    <property type="method" value="EM"/>
    <property type="resolution" value="2.92 A"/>
    <property type="chains" value="I=1-105"/>
</dbReference>
<dbReference type="PDB" id="8XX4">
    <property type="method" value="EM"/>
    <property type="resolution" value="2.60 A"/>
    <property type="chains" value="G=1-103"/>
</dbReference>
<dbReference type="PDB" id="8XX5">
    <property type="method" value="EM"/>
    <property type="resolution" value="2.40 A"/>
    <property type="chains" value="G=1-105"/>
</dbReference>
<dbReference type="PDB" id="8XXP">
    <property type="method" value="EM"/>
    <property type="resolution" value="2.60 A"/>
    <property type="chains" value="G=1-105"/>
</dbReference>
<dbReference type="PDB" id="8XXT">
    <property type="method" value="EM"/>
    <property type="resolution" value="2.85 A"/>
    <property type="chains" value="G=1-105"/>
</dbReference>
<dbReference type="PDB" id="8XY6">
    <property type="method" value="EM"/>
    <property type="resolution" value="3.00 A"/>
    <property type="chains" value="G=1-105"/>
</dbReference>
<dbReference type="PDB" id="8Y0E">
    <property type="method" value="EM"/>
    <property type="resolution" value="3.00 A"/>
    <property type="chains" value="G=1-105"/>
</dbReference>
<dbReference type="PDB" id="8YQT">
    <property type="method" value="EM"/>
    <property type="resolution" value="2.56 A"/>
    <property type="chains" value="G=1-105"/>
</dbReference>
<dbReference type="PDB" id="8YQU">
    <property type="method" value="EM"/>
    <property type="resolution" value="2.85 A"/>
    <property type="chains" value="G=1-105"/>
</dbReference>
<dbReference type="PDB" id="8YQV">
    <property type="method" value="EM"/>
    <property type="resolution" value="2.67 A"/>
    <property type="chains" value="G=1-105"/>
</dbReference>
<dbReference type="PDB" id="8YQW">
    <property type="method" value="EM"/>
    <property type="resolution" value="2.68 A"/>
    <property type="chains" value="G=1-105"/>
</dbReference>
<dbReference type="PDB" id="8YQY">
    <property type="method" value="EM"/>
    <property type="resolution" value="3.68 A"/>
    <property type="chains" value="G=1-105"/>
</dbReference>
<dbReference type="PDB" id="8YQZ">
    <property type="method" value="EM"/>
    <property type="resolution" value="2.78 A"/>
    <property type="chains" value="G=1-105"/>
</dbReference>
<dbReference type="PDBsum" id="8Q3B"/>
<dbReference type="PDBsum" id="8Q3K"/>
<dbReference type="PDBsum" id="8XX4"/>
<dbReference type="PDBsum" id="8XX5"/>
<dbReference type="PDBsum" id="8XXP"/>
<dbReference type="PDBsum" id="8XXT"/>
<dbReference type="PDBsum" id="8XY6"/>
<dbReference type="PDBsum" id="8Y0E"/>
<dbReference type="PDBsum" id="8YQT"/>
<dbReference type="PDBsum" id="8YQU"/>
<dbReference type="PDBsum" id="8YQV"/>
<dbReference type="PDBsum" id="8YQW"/>
<dbReference type="PDBsum" id="8YQY"/>
<dbReference type="PDBsum" id="8YQZ"/>
<dbReference type="EMDB" id="EMD-18120"/>
<dbReference type="EMDB" id="EMD-18129"/>
<dbReference type="SMR" id="Q65157"/>
<dbReference type="KEGG" id="vg:22220295"/>
<dbReference type="Proteomes" id="UP000000624">
    <property type="component" value="Segment"/>
</dbReference>
<dbReference type="GO" id="GO:0044423">
    <property type="term" value="C:virion component"/>
    <property type="evidence" value="ECO:0007669"/>
    <property type="project" value="UniProtKB-KW"/>
</dbReference>
<proteinExistence type="evidence at protein level"/>
<comment type="subcellular location">
    <subcellularLocation>
        <location evidence="1">Virion</location>
    </subcellularLocation>
</comment>
<comment type="similarity">
    <text evidence="2">Belongs to the asfivirus C122R family.</text>
</comment>
<organismHost>
    <name type="scientific">Ornithodoros</name>
    <name type="common">relapsing fever ticks</name>
    <dbReference type="NCBI Taxonomy" id="6937"/>
</organismHost>
<organismHost>
    <name type="scientific">Sus scrofa</name>
    <name type="common">Pig</name>
    <dbReference type="NCBI Taxonomy" id="9823"/>
</organismHost>
<protein>
    <recommendedName>
        <fullName>Uncharacterized protein C122R</fullName>
        <shortName>pC122R</shortName>
    </recommendedName>
</protein>
<reference key="1">
    <citation type="journal article" date="1995" name="Virology">
        <title>Analysis of the complete nucleotide sequence of African swine fever virus.</title>
        <authorList>
            <person name="Yanez R.J."/>
            <person name="Rodriguez J.M."/>
            <person name="Nogal M.L."/>
            <person name="Yuste L."/>
            <person name="Enriquez C."/>
            <person name="Rodriguez J.F."/>
            <person name="Vinuela E."/>
        </authorList>
    </citation>
    <scope>NUCLEOTIDE SEQUENCE [LARGE SCALE GENOMIC DNA]</scope>
</reference>
<reference key="2">
    <citation type="submission" date="2014-10" db="EMBL/GenBank/DDBJ databases">
        <authorList>
            <person name="Rodriguez J.M."/>
            <person name="Salas M.L."/>
        </authorList>
    </citation>
    <scope>SEQUENCE REVISION</scope>
</reference>
<reference key="3">
    <citation type="journal article" date="2018" name="J. Virol.">
        <title>A Proteomic Atlas of the African Swine Fever Virus Particle.</title>
        <authorList>
            <person name="Alejo A."/>
            <person name="Matamoros T."/>
            <person name="Guerra M."/>
            <person name="Andres G."/>
        </authorList>
    </citation>
    <scope>SUBCELLULAR LOCATION</scope>
</reference>